<gene>
    <name evidence="1" type="primary">rpsP</name>
    <name type="ordered locus">GDI3091</name>
    <name type="ordered locus">Gdia_3276</name>
</gene>
<protein>
    <recommendedName>
        <fullName evidence="1">Small ribosomal subunit protein bS16</fullName>
    </recommendedName>
    <alternativeName>
        <fullName evidence="3">30S ribosomal protein S16</fullName>
    </alternativeName>
</protein>
<keyword id="KW-1185">Reference proteome</keyword>
<keyword id="KW-0687">Ribonucleoprotein</keyword>
<keyword id="KW-0689">Ribosomal protein</keyword>
<reference key="1">
    <citation type="journal article" date="2009" name="BMC Genomics">
        <title>Complete genome sequence of the sugarcane nitrogen-fixing endophyte Gluconacetobacter diazotrophicus Pal5.</title>
        <authorList>
            <person name="Bertalan M."/>
            <person name="Albano R."/>
            <person name="de Padua V."/>
            <person name="Rouws L."/>
            <person name="Rojas C."/>
            <person name="Hemerly A."/>
            <person name="Teixeira K."/>
            <person name="Schwab S."/>
            <person name="Araujo J."/>
            <person name="Oliveira A."/>
            <person name="Franca L."/>
            <person name="Magalhaes V."/>
            <person name="Alqueres S."/>
            <person name="Cardoso A."/>
            <person name="Almeida W."/>
            <person name="Loureiro M.M."/>
            <person name="Nogueira E."/>
            <person name="Cidade D."/>
            <person name="Oliveira D."/>
            <person name="Simao T."/>
            <person name="Macedo J."/>
            <person name="Valadao A."/>
            <person name="Dreschsel M."/>
            <person name="Freitas F."/>
            <person name="Vidal M."/>
            <person name="Guedes H."/>
            <person name="Rodrigues E."/>
            <person name="Meneses C."/>
            <person name="Brioso P."/>
            <person name="Pozzer L."/>
            <person name="Figueiredo D."/>
            <person name="Montano H."/>
            <person name="Junior J."/>
            <person name="de Souza Filho G."/>
            <person name="Martin Quintana Flores V."/>
            <person name="Ferreira B."/>
            <person name="Branco A."/>
            <person name="Gonzalez P."/>
            <person name="Guillobel H."/>
            <person name="Lemos M."/>
            <person name="Seibel L."/>
            <person name="Macedo J."/>
            <person name="Alves-Ferreira M."/>
            <person name="Sachetto-Martins G."/>
            <person name="Coelho A."/>
            <person name="Santos E."/>
            <person name="Amaral G."/>
            <person name="Neves A."/>
            <person name="Pacheco A.B."/>
            <person name="Carvalho D."/>
            <person name="Lery L."/>
            <person name="Bisch P."/>
            <person name="Rossle S.C."/>
            <person name="Urmenyi T."/>
            <person name="Rael Pereira A."/>
            <person name="Silva R."/>
            <person name="Rondinelli E."/>
            <person name="von Kruger W."/>
            <person name="Martins O."/>
            <person name="Baldani J.I."/>
            <person name="Ferreira P.C."/>
        </authorList>
    </citation>
    <scope>NUCLEOTIDE SEQUENCE [LARGE SCALE GENOMIC DNA]</scope>
    <source>
        <strain>ATCC 49037 / DSM 5601 / CCUG 37298 / CIP 103539 / LMG 7603 / PAl5</strain>
    </source>
</reference>
<reference key="2">
    <citation type="journal article" date="2010" name="Stand. Genomic Sci.">
        <title>Two genome sequences of the same bacterial strain, Gluconacetobacter diazotrophicus PAl 5, suggest a new standard in genome sequence submission.</title>
        <authorList>
            <person name="Giongo A."/>
            <person name="Tyler H.L."/>
            <person name="Zipperer U.N."/>
            <person name="Triplett E.W."/>
        </authorList>
    </citation>
    <scope>NUCLEOTIDE SEQUENCE [LARGE SCALE GENOMIC DNA]</scope>
    <source>
        <strain>ATCC 49037 / DSM 5601 / CCUG 37298 / CIP 103539 / LMG 7603 / PAl5</strain>
    </source>
</reference>
<sequence>MSLKIRLARAGAKKRPYYHIVIADSRSPRDGRFIEKVGAYNPMLPSDHADRVRLVNERITHWLSQGALPTDRVARFLGNAGLAPKPAYTEQPKKSAPKKRAQERAAAAAAAAA</sequence>
<feature type="chain" id="PRO_1000080154" description="Small ribosomal subunit protein bS16">
    <location>
        <begin position="1"/>
        <end position="113"/>
    </location>
</feature>
<feature type="region of interest" description="Disordered" evidence="2">
    <location>
        <begin position="84"/>
        <end position="113"/>
    </location>
</feature>
<proteinExistence type="inferred from homology"/>
<accession>A9HS66</accession>
<accession>B5ZL61</accession>
<dbReference type="EMBL" id="AM889285">
    <property type="protein sequence ID" value="CAP57034.1"/>
    <property type="molecule type" value="Genomic_DNA"/>
</dbReference>
<dbReference type="EMBL" id="CP001189">
    <property type="protein sequence ID" value="ACI53003.1"/>
    <property type="molecule type" value="Genomic_DNA"/>
</dbReference>
<dbReference type="RefSeq" id="WP_012227448.1">
    <property type="nucleotide sequence ID" value="NC_010125.1"/>
</dbReference>
<dbReference type="SMR" id="A9HS66"/>
<dbReference type="STRING" id="272568.GDI3091"/>
<dbReference type="KEGG" id="gdi:GDI3091"/>
<dbReference type="KEGG" id="gdj:Gdia_3276"/>
<dbReference type="eggNOG" id="COG0228">
    <property type="taxonomic scope" value="Bacteria"/>
</dbReference>
<dbReference type="HOGENOM" id="CLU_100590_3_1_5"/>
<dbReference type="OrthoDB" id="9807878at2"/>
<dbReference type="Proteomes" id="UP000001176">
    <property type="component" value="Chromosome"/>
</dbReference>
<dbReference type="GO" id="GO:0005737">
    <property type="term" value="C:cytoplasm"/>
    <property type="evidence" value="ECO:0007669"/>
    <property type="project" value="UniProtKB-ARBA"/>
</dbReference>
<dbReference type="GO" id="GO:0015935">
    <property type="term" value="C:small ribosomal subunit"/>
    <property type="evidence" value="ECO:0007669"/>
    <property type="project" value="TreeGrafter"/>
</dbReference>
<dbReference type="GO" id="GO:0003735">
    <property type="term" value="F:structural constituent of ribosome"/>
    <property type="evidence" value="ECO:0007669"/>
    <property type="project" value="InterPro"/>
</dbReference>
<dbReference type="GO" id="GO:0006412">
    <property type="term" value="P:translation"/>
    <property type="evidence" value="ECO:0007669"/>
    <property type="project" value="UniProtKB-UniRule"/>
</dbReference>
<dbReference type="Gene3D" id="3.30.1320.10">
    <property type="match status" value="1"/>
</dbReference>
<dbReference type="HAMAP" id="MF_00385">
    <property type="entry name" value="Ribosomal_bS16"/>
    <property type="match status" value="1"/>
</dbReference>
<dbReference type="InterPro" id="IPR000307">
    <property type="entry name" value="Ribosomal_bS16"/>
</dbReference>
<dbReference type="InterPro" id="IPR020592">
    <property type="entry name" value="Ribosomal_bS16_CS"/>
</dbReference>
<dbReference type="InterPro" id="IPR023803">
    <property type="entry name" value="Ribosomal_bS16_dom_sf"/>
</dbReference>
<dbReference type="NCBIfam" id="TIGR00002">
    <property type="entry name" value="S16"/>
    <property type="match status" value="1"/>
</dbReference>
<dbReference type="PANTHER" id="PTHR12919">
    <property type="entry name" value="30S RIBOSOMAL PROTEIN S16"/>
    <property type="match status" value="1"/>
</dbReference>
<dbReference type="PANTHER" id="PTHR12919:SF20">
    <property type="entry name" value="SMALL RIBOSOMAL SUBUNIT PROTEIN BS16M"/>
    <property type="match status" value="1"/>
</dbReference>
<dbReference type="Pfam" id="PF00886">
    <property type="entry name" value="Ribosomal_S16"/>
    <property type="match status" value="1"/>
</dbReference>
<dbReference type="SUPFAM" id="SSF54565">
    <property type="entry name" value="Ribosomal protein S16"/>
    <property type="match status" value="1"/>
</dbReference>
<dbReference type="PROSITE" id="PS00732">
    <property type="entry name" value="RIBOSOMAL_S16"/>
    <property type="match status" value="1"/>
</dbReference>
<evidence type="ECO:0000255" key="1">
    <source>
        <dbReference type="HAMAP-Rule" id="MF_00385"/>
    </source>
</evidence>
<evidence type="ECO:0000256" key="2">
    <source>
        <dbReference type="SAM" id="MobiDB-lite"/>
    </source>
</evidence>
<evidence type="ECO:0000305" key="3"/>
<organism>
    <name type="scientific">Gluconacetobacter diazotrophicus (strain ATCC 49037 / DSM 5601 / CCUG 37298 / CIP 103539 / LMG 7603 / PAl5)</name>
    <dbReference type="NCBI Taxonomy" id="272568"/>
    <lineage>
        <taxon>Bacteria</taxon>
        <taxon>Pseudomonadati</taxon>
        <taxon>Pseudomonadota</taxon>
        <taxon>Alphaproteobacteria</taxon>
        <taxon>Acetobacterales</taxon>
        <taxon>Acetobacteraceae</taxon>
        <taxon>Gluconacetobacter</taxon>
    </lineage>
</organism>
<name>RS16_GLUDA</name>
<comment type="similarity">
    <text evidence="1">Belongs to the bacterial ribosomal protein bS16 family.</text>
</comment>